<proteinExistence type="inferred from homology"/>
<keyword id="KW-1015">Disulfide bond</keyword>
<keyword id="KW-0249">Electron transport</keyword>
<keyword id="KW-0676">Redox-active center</keyword>
<keyword id="KW-1185">Reference proteome</keyword>
<keyword id="KW-0813">Transport</keyword>
<feature type="chain" id="PRO_0000377508" description="Putative thioredoxin-like protein 453L">
    <location>
        <begin position="1"/>
        <end position="138"/>
    </location>
</feature>
<feature type="domain" description="Thioredoxin">
    <location>
        <begin position="3"/>
        <end position="138"/>
    </location>
</feature>
<feature type="active site" description="Nucleophile" evidence="1">
    <location>
        <position position="44"/>
    </location>
</feature>
<feature type="active site" description="Nucleophile" evidence="1">
    <location>
        <position position="47"/>
    </location>
</feature>
<feature type="site" description="Contributes to redox potential value" evidence="1">
    <location>
        <position position="45"/>
    </location>
</feature>
<feature type="site" description="Contributes to redox potential value" evidence="1">
    <location>
        <position position="46"/>
    </location>
</feature>
<feature type="disulfide bond" description="Redox-active" evidence="1">
    <location>
        <begin position="44"/>
        <end position="47"/>
    </location>
</feature>
<organismHost>
    <name type="scientific">Acheta domesticus</name>
    <name type="common">House cricket</name>
    <dbReference type="NCBI Taxonomy" id="6997"/>
</organismHost>
<organismHost>
    <name type="scientific">Chilo suppressalis</name>
    <name type="common">Asiatic rice borer moth</name>
    <dbReference type="NCBI Taxonomy" id="168631"/>
</organismHost>
<organismHost>
    <name type="scientific">Gryllus bimaculatus</name>
    <name type="common">Two-spotted cricket</name>
    <dbReference type="NCBI Taxonomy" id="6999"/>
</organismHost>
<organismHost>
    <name type="scientific">Gryllus campestris</name>
    <dbReference type="NCBI Taxonomy" id="58607"/>
</organismHost>
<organismHost>
    <name type="scientific">Spodoptera frugiperda</name>
    <name type="common">Fall armyworm</name>
    <dbReference type="NCBI Taxonomy" id="7108"/>
</organismHost>
<sequence>MYQQKYFEKPVYYLQRNDFDDNGNLIVPELRNKKVIIMIQANYCGHCTNAKGDYYKAAKYIKELEKNGGTSYKNKVVFATIQADGDEEGEKELNQILDKIKPTFVGFPDYVLYVNGKRIEDDGPPGRNFNNIVNYVMG</sequence>
<reference key="1">
    <citation type="journal article" date="2001" name="Virology">
        <title>Analysis of the first complete DNA sequence of an invertebrate iridovirus: coding strategy of the genome of Chilo iridescent virus.</title>
        <authorList>
            <person name="Jakob N.J."/>
            <person name="Mueller K."/>
            <person name="Bahr U."/>
            <person name="Darai G."/>
        </authorList>
    </citation>
    <scope>NUCLEOTIDE SEQUENCE [LARGE SCALE GENOMIC DNA]</scope>
</reference>
<reference key="2">
    <citation type="journal article" date="2007" name="Virol. J.">
        <title>Comparative genomic analysis of the family Iridoviridae: re-annotating and defining the core set of iridovirus genes.</title>
        <authorList>
            <person name="Eaton H.E."/>
            <person name="Metcalf J."/>
            <person name="Penny E."/>
            <person name="Tcherepanov V."/>
            <person name="Upton C."/>
            <person name="Brunetti C.R."/>
        </authorList>
    </citation>
    <scope>GENOME REANNOTATION</scope>
</reference>
<comment type="function">
    <text evidence="1">Participates in various redox reactions through the reversible oxidation of its active center dithiol to a disulfide and catalyzes dithiol-disulfide exchange reactions.</text>
</comment>
<comment type="similarity">
    <text evidence="2">Belongs to the thioredoxin family.</text>
</comment>
<organism>
    <name type="scientific">Invertebrate iridescent virus 6</name>
    <name type="common">IIV-6</name>
    <name type="synonym">Chilo iridescent virus</name>
    <dbReference type="NCBI Taxonomy" id="176652"/>
    <lineage>
        <taxon>Viruses</taxon>
        <taxon>Varidnaviria</taxon>
        <taxon>Bamfordvirae</taxon>
        <taxon>Nucleocytoviricota</taxon>
        <taxon>Megaviricetes</taxon>
        <taxon>Pimascovirales</taxon>
        <taxon>Iridoviridae</taxon>
        <taxon>Betairidovirinae</taxon>
        <taxon>Iridovirus</taxon>
    </lineage>
</organism>
<accession>Q91F73</accession>
<name>VF453_IIV6</name>
<dbReference type="EMBL" id="AF303741">
    <property type="protein sequence ID" value="AAK82313.1"/>
    <property type="molecule type" value="Genomic_DNA"/>
</dbReference>
<dbReference type="RefSeq" id="NP_149916.1">
    <property type="nucleotide sequence ID" value="NC_003038.1"/>
</dbReference>
<dbReference type="SMR" id="Q91F73"/>
<dbReference type="KEGG" id="vg:1733392"/>
<dbReference type="OrthoDB" id="21193at10239"/>
<dbReference type="Proteomes" id="UP000001359">
    <property type="component" value="Genome"/>
</dbReference>
<dbReference type="Gene3D" id="3.40.30.10">
    <property type="entry name" value="Glutaredoxin"/>
    <property type="match status" value="1"/>
</dbReference>
<dbReference type="InterPro" id="IPR036249">
    <property type="entry name" value="Thioredoxin-like_sf"/>
</dbReference>
<dbReference type="SUPFAM" id="SSF52833">
    <property type="entry name" value="Thioredoxin-like"/>
    <property type="match status" value="1"/>
</dbReference>
<protein>
    <recommendedName>
        <fullName>Putative thioredoxin-like protein 453L</fullName>
    </recommendedName>
</protein>
<evidence type="ECO:0000250" key="1"/>
<evidence type="ECO:0000305" key="2"/>
<gene>
    <name type="ORF">IIV6-453L</name>
</gene>